<protein>
    <recommendedName>
        <fullName evidence="1">Acetylglutamate kinase</fullName>
        <ecNumber evidence="1">2.7.2.8</ecNumber>
    </recommendedName>
    <alternativeName>
        <fullName evidence="1">N-acetyl-L-glutamate 5-phosphotransferase</fullName>
    </alternativeName>
    <alternativeName>
        <fullName evidence="1">NAG kinase</fullName>
        <shortName evidence="1">NAGK</shortName>
    </alternativeName>
</protein>
<name>ARGB_STAAC</name>
<accession>Q5HJJ1</accession>
<dbReference type="EC" id="2.7.2.8" evidence="1"/>
<dbReference type="EMBL" id="CP000046">
    <property type="protein sequence ID" value="AAW37463.1"/>
    <property type="molecule type" value="Genomic_DNA"/>
</dbReference>
<dbReference type="RefSeq" id="WP_000668894.1">
    <property type="nucleotide sequence ID" value="NZ_JBGOFO010000001.1"/>
</dbReference>
<dbReference type="SMR" id="Q5HJJ1"/>
<dbReference type="KEGG" id="sac:SACOL0167"/>
<dbReference type="HOGENOM" id="CLU_053680_1_0_9"/>
<dbReference type="UniPathway" id="UPA00068">
    <property type="reaction ID" value="UER00107"/>
</dbReference>
<dbReference type="Proteomes" id="UP000000530">
    <property type="component" value="Chromosome"/>
</dbReference>
<dbReference type="GO" id="GO:0005737">
    <property type="term" value="C:cytoplasm"/>
    <property type="evidence" value="ECO:0007669"/>
    <property type="project" value="UniProtKB-SubCell"/>
</dbReference>
<dbReference type="GO" id="GO:0003991">
    <property type="term" value="F:acetylglutamate kinase activity"/>
    <property type="evidence" value="ECO:0007669"/>
    <property type="project" value="UniProtKB-UniRule"/>
</dbReference>
<dbReference type="GO" id="GO:0005524">
    <property type="term" value="F:ATP binding"/>
    <property type="evidence" value="ECO:0007669"/>
    <property type="project" value="UniProtKB-UniRule"/>
</dbReference>
<dbReference type="GO" id="GO:0042450">
    <property type="term" value="P:arginine biosynthetic process via ornithine"/>
    <property type="evidence" value="ECO:0007669"/>
    <property type="project" value="UniProtKB-UniRule"/>
</dbReference>
<dbReference type="GO" id="GO:0006526">
    <property type="term" value="P:L-arginine biosynthetic process"/>
    <property type="evidence" value="ECO:0007669"/>
    <property type="project" value="UniProtKB-UniPathway"/>
</dbReference>
<dbReference type="CDD" id="cd04238">
    <property type="entry name" value="AAK_NAGK-like"/>
    <property type="match status" value="1"/>
</dbReference>
<dbReference type="FunFam" id="3.40.1160.10:FF:000037">
    <property type="entry name" value="Acetylglutamate kinase"/>
    <property type="match status" value="1"/>
</dbReference>
<dbReference type="Gene3D" id="3.40.1160.10">
    <property type="entry name" value="Acetylglutamate kinase-like"/>
    <property type="match status" value="1"/>
</dbReference>
<dbReference type="HAMAP" id="MF_00082">
    <property type="entry name" value="ArgB"/>
    <property type="match status" value="1"/>
</dbReference>
<dbReference type="InterPro" id="IPR036393">
    <property type="entry name" value="AceGlu_kinase-like_sf"/>
</dbReference>
<dbReference type="InterPro" id="IPR004662">
    <property type="entry name" value="AcgluKinase_fam"/>
</dbReference>
<dbReference type="InterPro" id="IPR037528">
    <property type="entry name" value="ArgB"/>
</dbReference>
<dbReference type="InterPro" id="IPR001048">
    <property type="entry name" value="Asp/Glu/Uridylate_kinase"/>
</dbReference>
<dbReference type="NCBIfam" id="TIGR00761">
    <property type="entry name" value="argB"/>
    <property type="match status" value="1"/>
</dbReference>
<dbReference type="PANTHER" id="PTHR23342">
    <property type="entry name" value="N-ACETYLGLUTAMATE SYNTHASE"/>
    <property type="match status" value="1"/>
</dbReference>
<dbReference type="PANTHER" id="PTHR23342:SF0">
    <property type="entry name" value="N-ACETYLGLUTAMATE SYNTHASE, MITOCHONDRIAL"/>
    <property type="match status" value="1"/>
</dbReference>
<dbReference type="Pfam" id="PF00696">
    <property type="entry name" value="AA_kinase"/>
    <property type="match status" value="1"/>
</dbReference>
<dbReference type="PIRSF" id="PIRSF000728">
    <property type="entry name" value="NAGK"/>
    <property type="match status" value="1"/>
</dbReference>
<dbReference type="SUPFAM" id="SSF53633">
    <property type="entry name" value="Carbamate kinase-like"/>
    <property type="match status" value="1"/>
</dbReference>
<gene>
    <name evidence="1" type="primary">argB</name>
    <name type="ordered locus">SACOL0167</name>
</gene>
<feature type="chain" id="PRO_0000112662" description="Acetylglutamate kinase">
    <location>
        <begin position="1"/>
        <end position="254"/>
    </location>
</feature>
<feature type="binding site" evidence="1">
    <location>
        <begin position="40"/>
        <end position="41"/>
    </location>
    <ligand>
        <name>substrate</name>
    </ligand>
</feature>
<feature type="binding site" evidence="1">
    <location>
        <position position="62"/>
    </location>
    <ligand>
        <name>substrate</name>
    </ligand>
</feature>
<feature type="binding site" evidence="1">
    <location>
        <position position="154"/>
    </location>
    <ligand>
        <name>substrate</name>
    </ligand>
</feature>
<feature type="site" description="Transition state stabilizer" evidence="1">
    <location>
        <position position="7"/>
    </location>
</feature>
<feature type="site" description="Transition state stabilizer" evidence="1">
    <location>
        <position position="212"/>
    </location>
</feature>
<reference key="1">
    <citation type="journal article" date="2005" name="J. Bacteriol.">
        <title>Insights on evolution of virulence and resistance from the complete genome analysis of an early methicillin-resistant Staphylococcus aureus strain and a biofilm-producing methicillin-resistant Staphylococcus epidermidis strain.</title>
        <authorList>
            <person name="Gill S.R."/>
            <person name="Fouts D.E."/>
            <person name="Archer G.L."/>
            <person name="Mongodin E.F."/>
            <person name="DeBoy R.T."/>
            <person name="Ravel J."/>
            <person name="Paulsen I.T."/>
            <person name="Kolonay J.F."/>
            <person name="Brinkac L.M."/>
            <person name="Beanan M.J."/>
            <person name="Dodson R.J."/>
            <person name="Daugherty S.C."/>
            <person name="Madupu R."/>
            <person name="Angiuoli S.V."/>
            <person name="Durkin A.S."/>
            <person name="Haft D.H."/>
            <person name="Vamathevan J.J."/>
            <person name="Khouri H."/>
            <person name="Utterback T.R."/>
            <person name="Lee C."/>
            <person name="Dimitrov G."/>
            <person name="Jiang L."/>
            <person name="Qin H."/>
            <person name="Weidman J."/>
            <person name="Tran K."/>
            <person name="Kang K.H."/>
            <person name="Hance I.R."/>
            <person name="Nelson K.E."/>
            <person name="Fraser C.M."/>
        </authorList>
    </citation>
    <scope>NUCLEOTIDE SEQUENCE [LARGE SCALE GENOMIC DNA]</scope>
    <source>
        <strain>COL</strain>
    </source>
</reference>
<proteinExistence type="inferred from homology"/>
<comment type="function">
    <text evidence="1">Catalyzes the ATP-dependent phosphorylation of N-acetyl-L-glutamate.</text>
</comment>
<comment type="catalytic activity">
    <reaction evidence="1">
        <text>N-acetyl-L-glutamate + ATP = N-acetyl-L-glutamyl 5-phosphate + ADP</text>
        <dbReference type="Rhea" id="RHEA:14629"/>
        <dbReference type="ChEBI" id="CHEBI:30616"/>
        <dbReference type="ChEBI" id="CHEBI:44337"/>
        <dbReference type="ChEBI" id="CHEBI:57936"/>
        <dbReference type="ChEBI" id="CHEBI:456216"/>
        <dbReference type="EC" id="2.7.2.8"/>
    </reaction>
</comment>
<comment type="pathway">
    <text evidence="1">Amino-acid biosynthesis; L-arginine biosynthesis; N(2)-acetyl-L-ornithine from L-glutamate: step 2/4.</text>
</comment>
<comment type="subcellular location">
    <subcellularLocation>
        <location evidence="1">Cytoplasm</location>
    </subcellularLocation>
</comment>
<comment type="similarity">
    <text evidence="1">Belongs to the acetylglutamate kinase family. ArgB subfamily.</text>
</comment>
<organism>
    <name type="scientific">Staphylococcus aureus (strain COL)</name>
    <dbReference type="NCBI Taxonomy" id="93062"/>
    <lineage>
        <taxon>Bacteria</taxon>
        <taxon>Bacillati</taxon>
        <taxon>Bacillota</taxon>
        <taxon>Bacilli</taxon>
        <taxon>Bacillales</taxon>
        <taxon>Staphylococcaceae</taxon>
        <taxon>Staphylococcus</taxon>
    </lineage>
</organism>
<sequence length="254" mass="27739">MKFIVIKIGGSTLSDMHPSIINNIKHLRSNNIYPIIVHGGGPFINEALSNQQIEPHFVNGLRVTDKATMTITKHTLIADVNTALVAQFNQHQCSAIGLCGLDAQLFEITSFDQQYGYVGVPTALNKDALQYLCTKFVPIINSIGFNNHDGEFYNINADTLAYFIASSLKAPIYVLSNIAGVLINDVVIPQLPLVDIHQYIEHGDIYGGMIPKVLDAKNAIENGCPKVIIASGNKPNIIESIYNNDFVGTTILNS</sequence>
<evidence type="ECO:0000255" key="1">
    <source>
        <dbReference type="HAMAP-Rule" id="MF_00082"/>
    </source>
</evidence>
<keyword id="KW-0028">Amino-acid biosynthesis</keyword>
<keyword id="KW-0055">Arginine biosynthesis</keyword>
<keyword id="KW-0067">ATP-binding</keyword>
<keyword id="KW-0963">Cytoplasm</keyword>
<keyword id="KW-0418">Kinase</keyword>
<keyword id="KW-0547">Nucleotide-binding</keyword>
<keyword id="KW-0808">Transferase</keyword>